<evidence type="ECO:0000255" key="1">
    <source>
        <dbReference type="HAMAP-Rule" id="MF_01568"/>
    </source>
</evidence>
<organism>
    <name type="scientific">Streptococcus pneumoniae (strain ATCC BAA-255 / R6)</name>
    <dbReference type="NCBI Taxonomy" id="171101"/>
    <lineage>
        <taxon>Bacteria</taxon>
        <taxon>Bacillati</taxon>
        <taxon>Bacillota</taxon>
        <taxon>Bacilli</taxon>
        <taxon>Lactobacillales</taxon>
        <taxon>Streptococcaceae</taxon>
        <taxon>Streptococcus</taxon>
    </lineage>
</organism>
<dbReference type="EC" id="3.6.1.15" evidence="1"/>
<dbReference type="EC" id="3.6.1.6" evidence="1"/>
<dbReference type="EMBL" id="AE007317">
    <property type="protein sequence ID" value="AAL00522.1"/>
    <property type="molecule type" value="Genomic_DNA"/>
</dbReference>
<dbReference type="PIR" id="E98086">
    <property type="entry name" value="E98086"/>
</dbReference>
<dbReference type="RefSeq" id="NP_359311.1">
    <property type="nucleotide sequence ID" value="NC_003098.1"/>
</dbReference>
<dbReference type="RefSeq" id="WP_000775321.1">
    <property type="nucleotide sequence ID" value="NC_003098.1"/>
</dbReference>
<dbReference type="SMR" id="Q8DNH5"/>
<dbReference type="STRING" id="171101.spr1719"/>
<dbReference type="KEGG" id="spr:spr1719"/>
<dbReference type="PATRIC" id="fig|171101.6.peg.1859"/>
<dbReference type="eggNOG" id="COG3557">
    <property type="taxonomic scope" value="Bacteria"/>
</dbReference>
<dbReference type="HOGENOM" id="CLU_109787_1_0_9"/>
<dbReference type="Proteomes" id="UP000000586">
    <property type="component" value="Chromosome"/>
</dbReference>
<dbReference type="GO" id="GO:0000287">
    <property type="term" value="F:magnesium ion binding"/>
    <property type="evidence" value="ECO:0007669"/>
    <property type="project" value="UniProtKB-UniRule"/>
</dbReference>
<dbReference type="GO" id="GO:0017110">
    <property type="term" value="F:nucleoside diphosphate phosphatase activity"/>
    <property type="evidence" value="ECO:0007669"/>
    <property type="project" value="UniProtKB-UniRule"/>
</dbReference>
<dbReference type="GO" id="GO:0017111">
    <property type="term" value="F:ribonucleoside triphosphate phosphatase activity"/>
    <property type="evidence" value="ECO:0007669"/>
    <property type="project" value="UniProtKB-UniRule"/>
</dbReference>
<dbReference type="Gene3D" id="2.40.380.10">
    <property type="entry name" value="FomD-like"/>
    <property type="match status" value="1"/>
</dbReference>
<dbReference type="HAMAP" id="MF_01568">
    <property type="entry name" value="Ntdp"/>
    <property type="match status" value="1"/>
</dbReference>
<dbReference type="InterPro" id="IPR007295">
    <property type="entry name" value="DUF402"/>
</dbReference>
<dbReference type="InterPro" id="IPR035930">
    <property type="entry name" value="FomD-like_sf"/>
</dbReference>
<dbReference type="InterPro" id="IPR050212">
    <property type="entry name" value="Ntdp-like"/>
</dbReference>
<dbReference type="InterPro" id="IPR016882">
    <property type="entry name" value="SA1684"/>
</dbReference>
<dbReference type="NCBIfam" id="NF010183">
    <property type="entry name" value="PRK13662.1"/>
    <property type="match status" value="1"/>
</dbReference>
<dbReference type="PANTHER" id="PTHR39159">
    <property type="match status" value="1"/>
</dbReference>
<dbReference type="PANTHER" id="PTHR39159:SF1">
    <property type="entry name" value="UPF0374 PROTEIN YGAC"/>
    <property type="match status" value="1"/>
</dbReference>
<dbReference type="Pfam" id="PF04167">
    <property type="entry name" value="DUF402"/>
    <property type="match status" value="1"/>
</dbReference>
<dbReference type="PIRSF" id="PIRSF028345">
    <property type="entry name" value="UCP028345"/>
    <property type="match status" value="1"/>
</dbReference>
<dbReference type="SUPFAM" id="SSF159234">
    <property type="entry name" value="FomD-like"/>
    <property type="match status" value="1"/>
</dbReference>
<protein>
    <recommendedName>
        <fullName evidence="1">Nucleoside triphosphate/diphosphate phosphatase</fullName>
        <ecNumber evidence="1">3.6.1.15</ecNumber>
        <ecNumber evidence="1">3.6.1.6</ecNumber>
    </recommendedName>
</protein>
<gene>
    <name type="ordered locus">spr1719</name>
</gene>
<feature type="chain" id="PRO_0000248131" description="Nucleoside triphosphate/diphosphate phosphatase">
    <location>
        <begin position="1"/>
        <end position="177"/>
    </location>
</feature>
<feature type="active site" description="Proton donor" evidence="1">
    <location>
        <position position="23"/>
    </location>
</feature>
<feature type="binding site" evidence="1">
    <location>
        <position position="87"/>
    </location>
    <ligand>
        <name>Mg(2+)</name>
        <dbReference type="ChEBI" id="CHEBI:18420"/>
        <label>1</label>
    </ligand>
</feature>
<feature type="binding site" evidence="1">
    <location>
        <position position="103"/>
    </location>
    <ligand>
        <name>Mg(2+)</name>
        <dbReference type="ChEBI" id="CHEBI:18420"/>
        <label>1</label>
    </ligand>
</feature>
<feature type="binding site" evidence="1">
    <location>
        <position position="105"/>
    </location>
    <ligand>
        <name>Mg(2+)</name>
        <dbReference type="ChEBI" id="CHEBI:18420"/>
        <label>2</label>
    </ligand>
</feature>
<feature type="binding site" evidence="1">
    <location>
        <position position="107"/>
    </location>
    <ligand>
        <name>Mg(2+)</name>
        <dbReference type="ChEBI" id="CHEBI:18420"/>
        <label>1</label>
    </ligand>
</feature>
<feature type="binding site" evidence="1">
    <location>
        <position position="107"/>
    </location>
    <ligand>
        <name>Mg(2+)</name>
        <dbReference type="ChEBI" id="CHEBI:18420"/>
        <label>2</label>
    </ligand>
</feature>
<feature type="binding site" evidence="1">
    <location>
        <position position="120"/>
    </location>
    <ligand>
        <name>Mg(2+)</name>
        <dbReference type="ChEBI" id="CHEBI:18420"/>
        <label>2</label>
    </ligand>
</feature>
<feature type="binding site" evidence="1">
    <location>
        <position position="123"/>
    </location>
    <ligand>
        <name>Mg(2+)</name>
        <dbReference type="ChEBI" id="CHEBI:18420"/>
        <label>2</label>
    </ligand>
</feature>
<accession>Q8DNH5</accession>
<name>NTDP_STRR6</name>
<reference key="1">
    <citation type="journal article" date="2001" name="J. Bacteriol.">
        <title>Genome of the bacterium Streptococcus pneumoniae strain R6.</title>
        <authorList>
            <person name="Hoskins J."/>
            <person name="Alborn W.E. Jr."/>
            <person name="Arnold J."/>
            <person name="Blaszczak L.C."/>
            <person name="Burgett S."/>
            <person name="DeHoff B.S."/>
            <person name="Estrem S.T."/>
            <person name="Fritz L."/>
            <person name="Fu D.-J."/>
            <person name="Fuller W."/>
            <person name="Geringer C."/>
            <person name="Gilmour R."/>
            <person name="Glass J.S."/>
            <person name="Khoja H."/>
            <person name="Kraft A.R."/>
            <person name="Lagace R.E."/>
            <person name="LeBlanc D.J."/>
            <person name="Lee L.N."/>
            <person name="Lefkowitz E.J."/>
            <person name="Lu J."/>
            <person name="Matsushima P."/>
            <person name="McAhren S.M."/>
            <person name="McHenney M."/>
            <person name="McLeaster K."/>
            <person name="Mundy C.W."/>
            <person name="Nicas T.I."/>
            <person name="Norris F.H."/>
            <person name="O'Gara M."/>
            <person name="Peery R.B."/>
            <person name="Robertson G.T."/>
            <person name="Rockey P."/>
            <person name="Sun P.-M."/>
            <person name="Winkler M.E."/>
            <person name="Yang Y."/>
            <person name="Young-Bellido M."/>
            <person name="Zhao G."/>
            <person name="Zook C.A."/>
            <person name="Baltz R.H."/>
            <person name="Jaskunas S.R."/>
            <person name="Rosteck P.R. Jr."/>
            <person name="Skatrud P.L."/>
            <person name="Glass J.I."/>
        </authorList>
    </citation>
    <scope>NUCLEOTIDE SEQUENCE [LARGE SCALE GENOMIC DNA]</scope>
    <source>
        <strain>ATCC BAA-255 / R6</strain>
    </source>
</reference>
<sequence length="177" mass="21338">MKLPKEGDFITIQSYKHDGSLHRTWRDTMVLKTTENAIIGVNDHTLVTESDGRRWVTREPAIVYFHKKYWFNIIAMIRDNGTSYYCNMASPYYLDEEALKYIDYDLDVKIFTDGEKRLLDVEEYERHKRKMNYSDDLDYILKEHVKILVDWINNGRGPFSEAYVNIWYKRYVELKNR</sequence>
<comment type="function">
    <text evidence="1">Has nucleoside phosphatase activity towards nucleoside triphosphates and nucleoside diphosphates.</text>
</comment>
<comment type="catalytic activity">
    <reaction evidence="1">
        <text>a ribonucleoside 5'-triphosphate + H2O = a ribonucleoside 5'-diphosphate + phosphate + H(+)</text>
        <dbReference type="Rhea" id="RHEA:23680"/>
        <dbReference type="ChEBI" id="CHEBI:15377"/>
        <dbReference type="ChEBI" id="CHEBI:15378"/>
        <dbReference type="ChEBI" id="CHEBI:43474"/>
        <dbReference type="ChEBI" id="CHEBI:57930"/>
        <dbReference type="ChEBI" id="CHEBI:61557"/>
        <dbReference type="EC" id="3.6.1.15"/>
    </reaction>
</comment>
<comment type="catalytic activity">
    <reaction evidence="1">
        <text>a ribonucleoside 5'-diphosphate + H2O = a ribonucleoside 5'-phosphate + phosphate + H(+)</text>
        <dbReference type="Rhea" id="RHEA:36799"/>
        <dbReference type="ChEBI" id="CHEBI:15377"/>
        <dbReference type="ChEBI" id="CHEBI:15378"/>
        <dbReference type="ChEBI" id="CHEBI:43474"/>
        <dbReference type="ChEBI" id="CHEBI:57930"/>
        <dbReference type="ChEBI" id="CHEBI:58043"/>
        <dbReference type="EC" id="3.6.1.6"/>
    </reaction>
</comment>
<comment type="cofactor">
    <cofactor evidence="1">
        <name>Mg(2+)</name>
        <dbReference type="ChEBI" id="CHEBI:18420"/>
    </cofactor>
</comment>
<comment type="similarity">
    <text evidence="1">Belongs to the Ntdp family.</text>
</comment>
<keyword id="KW-0378">Hydrolase</keyword>
<keyword id="KW-0460">Magnesium</keyword>
<keyword id="KW-0479">Metal-binding</keyword>
<keyword id="KW-1185">Reference proteome</keyword>
<proteinExistence type="inferred from homology"/>